<protein>
    <recommendedName>
        <fullName evidence="1">Quinolinate synthase</fullName>
        <ecNumber evidence="1">2.5.1.72</ecNumber>
    </recommendedName>
</protein>
<sequence>MFATQTRINQNFNSIPDDLFEAIADLKKELNAVILAHYYQEPDIQDIADYIGDSLGLSQKAAETDADVIVFAGVHFMAETAKILNPNKLVLLPDLDAGCSLADSCPPEEFGKFKAAHPDAIVVSYINCTAAIKAMSDIICTSSNSVKIVKQIPTDQPIIFAPDKNLGRYVMEQTGRDLILWSGSCIVHETFSEKKIVQLKIEHPEAEIIAHPECEPNLLRHANYIGSTTALLKYCQESQEQEFIVATEPGIIHQMQKREPKKNFIPAPAMNNCACNECPHMRLNNLEKLYLAMKNKTPEIMIPEETRVAALKPIQKMLELSFT</sequence>
<dbReference type="EC" id="2.5.1.72" evidence="1"/>
<dbReference type="EMBL" id="CP000393">
    <property type="protein sequence ID" value="ABG51658.1"/>
    <property type="molecule type" value="Genomic_DNA"/>
</dbReference>
<dbReference type="RefSeq" id="WP_011612022.1">
    <property type="nucleotide sequence ID" value="NC_008312.1"/>
</dbReference>
<dbReference type="SMR" id="Q112B6"/>
<dbReference type="STRING" id="203124.Tery_2446"/>
<dbReference type="KEGG" id="ter:Tery_2446"/>
<dbReference type="eggNOG" id="COG0379">
    <property type="taxonomic scope" value="Bacteria"/>
</dbReference>
<dbReference type="HOGENOM" id="CLU_047382_0_0_3"/>
<dbReference type="OrthoDB" id="9801204at2"/>
<dbReference type="UniPathway" id="UPA00253">
    <property type="reaction ID" value="UER00327"/>
</dbReference>
<dbReference type="GO" id="GO:0005829">
    <property type="term" value="C:cytosol"/>
    <property type="evidence" value="ECO:0007669"/>
    <property type="project" value="TreeGrafter"/>
</dbReference>
<dbReference type="GO" id="GO:0051539">
    <property type="term" value="F:4 iron, 4 sulfur cluster binding"/>
    <property type="evidence" value="ECO:0007669"/>
    <property type="project" value="UniProtKB-KW"/>
</dbReference>
<dbReference type="GO" id="GO:0046872">
    <property type="term" value="F:metal ion binding"/>
    <property type="evidence" value="ECO:0007669"/>
    <property type="project" value="UniProtKB-KW"/>
</dbReference>
<dbReference type="GO" id="GO:0008987">
    <property type="term" value="F:quinolinate synthetase A activity"/>
    <property type="evidence" value="ECO:0007669"/>
    <property type="project" value="UniProtKB-UniRule"/>
</dbReference>
<dbReference type="GO" id="GO:0034628">
    <property type="term" value="P:'de novo' NAD biosynthetic process from L-aspartate"/>
    <property type="evidence" value="ECO:0007669"/>
    <property type="project" value="TreeGrafter"/>
</dbReference>
<dbReference type="FunFam" id="3.40.50.10800:FF:000003">
    <property type="entry name" value="Quinolinate synthase A"/>
    <property type="match status" value="1"/>
</dbReference>
<dbReference type="Gene3D" id="3.40.50.10800">
    <property type="entry name" value="NadA-like"/>
    <property type="match status" value="3"/>
</dbReference>
<dbReference type="HAMAP" id="MF_00568">
    <property type="entry name" value="NadA_type2"/>
    <property type="match status" value="1"/>
</dbReference>
<dbReference type="InterPro" id="IPR003473">
    <property type="entry name" value="NadA"/>
</dbReference>
<dbReference type="InterPro" id="IPR036094">
    <property type="entry name" value="NadA_sf"/>
</dbReference>
<dbReference type="InterPro" id="IPR023066">
    <property type="entry name" value="Quinolinate_synth_type2"/>
</dbReference>
<dbReference type="NCBIfam" id="TIGR00550">
    <property type="entry name" value="nadA"/>
    <property type="match status" value="1"/>
</dbReference>
<dbReference type="NCBIfam" id="NF006878">
    <property type="entry name" value="PRK09375.1-2"/>
    <property type="match status" value="1"/>
</dbReference>
<dbReference type="PANTHER" id="PTHR30573:SF0">
    <property type="entry name" value="QUINOLINATE SYNTHASE, CHLOROPLASTIC"/>
    <property type="match status" value="1"/>
</dbReference>
<dbReference type="PANTHER" id="PTHR30573">
    <property type="entry name" value="QUINOLINATE SYNTHETASE A"/>
    <property type="match status" value="1"/>
</dbReference>
<dbReference type="Pfam" id="PF02445">
    <property type="entry name" value="NadA"/>
    <property type="match status" value="1"/>
</dbReference>
<dbReference type="SUPFAM" id="SSF142754">
    <property type="entry name" value="NadA-like"/>
    <property type="match status" value="1"/>
</dbReference>
<reference key="1">
    <citation type="journal article" date="2015" name="Proc. Natl. Acad. Sci. U.S.A.">
        <title>Trichodesmium genome maintains abundant, widespread noncoding DNA in situ, despite oligotrophic lifestyle.</title>
        <authorList>
            <person name="Walworth N."/>
            <person name="Pfreundt U."/>
            <person name="Nelson W.C."/>
            <person name="Mincer T."/>
            <person name="Heidelberg J.F."/>
            <person name="Fu F."/>
            <person name="Waterbury J.B."/>
            <person name="Glavina del Rio T."/>
            <person name="Goodwin L."/>
            <person name="Kyrpides N.C."/>
            <person name="Land M.L."/>
            <person name="Woyke T."/>
            <person name="Hutchins D.A."/>
            <person name="Hess W.R."/>
            <person name="Webb E.A."/>
        </authorList>
    </citation>
    <scope>NUCLEOTIDE SEQUENCE [LARGE SCALE GENOMIC DNA]</scope>
    <source>
        <strain>IMS101</strain>
    </source>
</reference>
<proteinExistence type="inferred from homology"/>
<comment type="function">
    <text evidence="1">Catalyzes the condensation of iminoaspartate with dihydroxyacetone phosphate to form quinolinate.</text>
</comment>
<comment type="catalytic activity">
    <reaction evidence="1">
        <text>iminosuccinate + dihydroxyacetone phosphate = quinolinate + phosphate + 2 H2O + H(+)</text>
        <dbReference type="Rhea" id="RHEA:25888"/>
        <dbReference type="ChEBI" id="CHEBI:15377"/>
        <dbReference type="ChEBI" id="CHEBI:15378"/>
        <dbReference type="ChEBI" id="CHEBI:29959"/>
        <dbReference type="ChEBI" id="CHEBI:43474"/>
        <dbReference type="ChEBI" id="CHEBI:57642"/>
        <dbReference type="ChEBI" id="CHEBI:77875"/>
        <dbReference type="EC" id="2.5.1.72"/>
    </reaction>
    <physiologicalReaction direction="left-to-right" evidence="1">
        <dbReference type="Rhea" id="RHEA:25889"/>
    </physiologicalReaction>
</comment>
<comment type="cofactor">
    <cofactor evidence="1">
        <name>[4Fe-4S] cluster</name>
        <dbReference type="ChEBI" id="CHEBI:49883"/>
    </cofactor>
    <text evidence="1">Binds 1 [4Fe-4S] cluster per subunit.</text>
</comment>
<comment type="pathway">
    <text evidence="1">Cofactor biosynthesis; NAD(+) biosynthesis; quinolinate from iminoaspartate: step 1/1.</text>
</comment>
<comment type="subcellular location">
    <subcellularLocation>
        <location evidence="1">Cytoplasm</location>
    </subcellularLocation>
</comment>
<comment type="similarity">
    <text evidence="1">Belongs to the quinolinate synthase family. Type 2 subfamily.</text>
</comment>
<organism>
    <name type="scientific">Trichodesmium erythraeum (strain IMS101)</name>
    <dbReference type="NCBI Taxonomy" id="203124"/>
    <lineage>
        <taxon>Bacteria</taxon>
        <taxon>Bacillati</taxon>
        <taxon>Cyanobacteriota</taxon>
        <taxon>Cyanophyceae</taxon>
        <taxon>Oscillatoriophycideae</taxon>
        <taxon>Oscillatoriales</taxon>
        <taxon>Microcoleaceae</taxon>
        <taxon>Trichodesmium</taxon>
    </lineage>
</organism>
<gene>
    <name evidence="1" type="primary">nadA</name>
    <name type="ordered locus">Tery_2446</name>
</gene>
<accession>Q112B6</accession>
<name>NADA_TRIEI</name>
<evidence type="ECO:0000255" key="1">
    <source>
        <dbReference type="HAMAP-Rule" id="MF_00568"/>
    </source>
</evidence>
<feature type="chain" id="PRO_1000129449" description="Quinolinate synthase">
    <location>
        <begin position="1"/>
        <end position="323"/>
    </location>
</feature>
<feature type="binding site" evidence="1">
    <location>
        <position position="37"/>
    </location>
    <ligand>
        <name>iminosuccinate</name>
        <dbReference type="ChEBI" id="CHEBI:77875"/>
    </ligand>
</feature>
<feature type="binding site" evidence="1">
    <location>
        <position position="54"/>
    </location>
    <ligand>
        <name>iminosuccinate</name>
        <dbReference type="ChEBI" id="CHEBI:77875"/>
    </ligand>
</feature>
<feature type="binding site" evidence="1">
    <location>
        <position position="99"/>
    </location>
    <ligand>
        <name>[4Fe-4S] cluster</name>
        <dbReference type="ChEBI" id="CHEBI:49883"/>
    </ligand>
</feature>
<feature type="binding site" evidence="1">
    <location>
        <begin position="125"/>
        <end position="127"/>
    </location>
    <ligand>
        <name>iminosuccinate</name>
        <dbReference type="ChEBI" id="CHEBI:77875"/>
    </ligand>
</feature>
<feature type="binding site" evidence="1">
    <location>
        <position position="142"/>
    </location>
    <ligand>
        <name>iminosuccinate</name>
        <dbReference type="ChEBI" id="CHEBI:77875"/>
    </ligand>
</feature>
<feature type="binding site" evidence="1">
    <location>
        <position position="185"/>
    </location>
    <ligand>
        <name>[4Fe-4S] cluster</name>
        <dbReference type="ChEBI" id="CHEBI:49883"/>
    </ligand>
</feature>
<feature type="binding site" evidence="1">
    <location>
        <begin position="211"/>
        <end position="213"/>
    </location>
    <ligand>
        <name>iminosuccinate</name>
        <dbReference type="ChEBI" id="CHEBI:77875"/>
    </ligand>
</feature>
<feature type="binding site" evidence="1">
    <location>
        <position position="228"/>
    </location>
    <ligand>
        <name>iminosuccinate</name>
        <dbReference type="ChEBI" id="CHEBI:77875"/>
    </ligand>
</feature>
<feature type="binding site" evidence="1">
    <location>
        <position position="278"/>
    </location>
    <ligand>
        <name>[4Fe-4S] cluster</name>
        <dbReference type="ChEBI" id="CHEBI:49883"/>
    </ligand>
</feature>
<keyword id="KW-0004">4Fe-4S</keyword>
<keyword id="KW-0963">Cytoplasm</keyword>
<keyword id="KW-0408">Iron</keyword>
<keyword id="KW-0411">Iron-sulfur</keyword>
<keyword id="KW-0479">Metal-binding</keyword>
<keyword id="KW-0662">Pyridine nucleotide biosynthesis</keyword>
<keyword id="KW-0808">Transferase</keyword>